<name>TRUB_THEKO</name>
<sequence length="338" mass="38215">MARDEVRRILPADIKREVVVKDEKAETNPKWGFPPEKRPIEMHIQFGIINLDKPPGPTSHEVVAWVKRILNLNKAGHGGTLDPKVSGVLPVALERATRVVQALLPAGKEYVALMHLHGDVPEDKILAVMREFQGEIIQRPPLRSAVKRRLRTRKVYYIDVLEIEGRDVLFRVGVEAGTYIRSLIHHIGLALGVGAHMAELRRTRSGPFKEDETLVTLHDLVDYYHFWKEDGVEEYFRKAIQPMEKAVEHLPKVWIRDSAVAAVTHGADLAVPGVVKLHKGIKKGDLVAIMTLKDELVALGKAMMTTGEMLQKSKGIAVDVDKVFMPRDWYPKLWKEKE</sequence>
<accession>Q5JJE8</accession>
<keyword id="KW-0413">Isomerase</keyword>
<keyword id="KW-1185">Reference proteome</keyword>
<keyword id="KW-0819">tRNA processing</keyword>
<gene>
    <name evidence="1" type="primary">truB</name>
    <name type="ordered locus">TK1509</name>
</gene>
<organism>
    <name type="scientific">Thermococcus kodakarensis (strain ATCC BAA-918 / JCM 12380 / KOD1)</name>
    <name type="common">Pyrococcus kodakaraensis (strain KOD1)</name>
    <dbReference type="NCBI Taxonomy" id="69014"/>
    <lineage>
        <taxon>Archaea</taxon>
        <taxon>Methanobacteriati</taxon>
        <taxon>Methanobacteriota</taxon>
        <taxon>Thermococci</taxon>
        <taxon>Thermococcales</taxon>
        <taxon>Thermococcaceae</taxon>
        <taxon>Thermococcus</taxon>
    </lineage>
</organism>
<evidence type="ECO:0000255" key="1">
    <source>
        <dbReference type="HAMAP-Rule" id="MF_01081"/>
    </source>
</evidence>
<protein>
    <recommendedName>
        <fullName evidence="1">Probable tRNA pseudouridine synthase B</fullName>
        <ecNumber evidence="1">5.4.99.25</ecNumber>
    </recommendedName>
    <alternativeName>
        <fullName evidence="1">tRNA pseudouridine(55) synthase</fullName>
        <shortName evidence="1">Psi55 synthase</shortName>
    </alternativeName>
    <alternativeName>
        <fullName evidence="1">tRNA pseudouridylate synthase</fullName>
    </alternativeName>
    <alternativeName>
        <fullName evidence="1">tRNA-uridine isomerase</fullName>
    </alternativeName>
</protein>
<feature type="chain" id="PRO_0000121970" description="Probable tRNA pseudouridine synthase B">
    <location>
        <begin position="1"/>
        <end position="338"/>
    </location>
</feature>
<feature type="domain" description="PUA" evidence="1">
    <location>
        <begin position="250"/>
        <end position="325"/>
    </location>
</feature>
<feature type="active site" description="Nucleophile" evidence="1">
    <location>
        <position position="82"/>
    </location>
</feature>
<proteinExistence type="inferred from homology"/>
<dbReference type="EC" id="5.4.99.25" evidence="1"/>
<dbReference type="EMBL" id="AP006878">
    <property type="protein sequence ID" value="BAD85698.1"/>
    <property type="molecule type" value="Genomic_DNA"/>
</dbReference>
<dbReference type="RefSeq" id="WP_011250460.1">
    <property type="nucleotide sequence ID" value="NC_006624.1"/>
</dbReference>
<dbReference type="SMR" id="Q5JJE8"/>
<dbReference type="FunCoup" id="Q5JJE8">
    <property type="interactions" value="196"/>
</dbReference>
<dbReference type="STRING" id="69014.TK1509"/>
<dbReference type="EnsemblBacteria" id="BAD85698">
    <property type="protein sequence ID" value="BAD85698"/>
    <property type="gene ID" value="TK1509"/>
</dbReference>
<dbReference type="GeneID" id="78448037"/>
<dbReference type="KEGG" id="tko:TK1509"/>
<dbReference type="PATRIC" id="fig|69014.16.peg.1469"/>
<dbReference type="eggNOG" id="arCOG00987">
    <property type="taxonomic scope" value="Archaea"/>
</dbReference>
<dbReference type="HOGENOM" id="CLU_032087_3_0_2"/>
<dbReference type="InParanoid" id="Q5JJE8"/>
<dbReference type="OrthoDB" id="35866at2157"/>
<dbReference type="PhylomeDB" id="Q5JJE8"/>
<dbReference type="Proteomes" id="UP000000536">
    <property type="component" value="Chromosome"/>
</dbReference>
<dbReference type="GO" id="GO:0009982">
    <property type="term" value="F:pseudouridine synthase activity"/>
    <property type="evidence" value="ECO:0000318"/>
    <property type="project" value="GO_Central"/>
</dbReference>
<dbReference type="GO" id="GO:0003723">
    <property type="term" value="F:RNA binding"/>
    <property type="evidence" value="ECO:0007669"/>
    <property type="project" value="InterPro"/>
</dbReference>
<dbReference type="GO" id="GO:0160148">
    <property type="term" value="F:tRNA pseudouridine(55) synthase activity"/>
    <property type="evidence" value="ECO:0007669"/>
    <property type="project" value="UniProtKB-EC"/>
</dbReference>
<dbReference type="GO" id="GO:0000495">
    <property type="term" value="P:box H/ACA sno(s)RNA 3'-end processing"/>
    <property type="evidence" value="ECO:0000318"/>
    <property type="project" value="GO_Central"/>
</dbReference>
<dbReference type="GO" id="GO:1990481">
    <property type="term" value="P:mRNA pseudouridine synthesis"/>
    <property type="evidence" value="ECO:0000318"/>
    <property type="project" value="GO_Central"/>
</dbReference>
<dbReference type="GO" id="GO:0031118">
    <property type="term" value="P:rRNA pseudouridine synthesis"/>
    <property type="evidence" value="ECO:0000318"/>
    <property type="project" value="GO_Central"/>
</dbReference>
<dbReference type="GO" id="GO:0031120">
    <property type="term" value="P:snRNA pseudouridine synthesis"/>
    <property type="evidence" value="ECO:0000318"/>
    <property type="project" value="GO_Central"/>
</dbReference>
<dbReference type="GO" id="GO:0031119">
    <property type="term" value="P:tRNA pseudouridine synthesis"/>
    <property type="evidence" value="ECO:0007669"/>
    <property type="project" value="UniProtKB-UniRule"/>
</dbReference>
<dbReference type="CDD" id="cd02572">
    <property type="entry name" value="PseudoU_synth_hDyskerin"/>
    <property type="match status" value="1"/>
</dbReference>
<dbReference type="CDD" id="cd21148">
    <property type="entry name" value="PUA_Cbf5"/>
    <property type="match status" value="1"/>
</dbReference>
<dbReference type="FunFam" id="3.30.2350.10:FF:000001">
    <property type="entry name" value="H/ACA ribonucleoprotein complex subunit CBF5"/>
    <property type="match status" value="1"/>
</dbReference>
<dbReference type="FunFam" id="2.30.130.10:FF:000010">
    <property type="entry name" value="Probable tRNA pseudouridine synthase B"/>
    <property type="match status" value="1"/>
</dbReference>
<dbReference type="Gene3D" id="3.30.2350.10">
    <property type="entry name" value="Pseudouridine synthase"/>
    <property type="match status" value="1"/>
</dbReference>
<dbReference type="Gene3D" id="2.30.130.10">
    <property type="entry name" value="PUA domain"/>
    <property type="match status" value="1"/>
</dbReference>
<dbReference type="HAMAP" id="MF_01081">
    <property type="entry name" value="TruB_arch"/>
    <property type="match status" value="1"/>
</dbReference>
<dbReference type="InterPro" id="IPR012960">
    <property type="entry name" value="Dyskerin-like"/>
</dbReference>
<dbReference type="InterPro" id="IPR020103">
    <property type="entry name" value="PsdUridine_synth_cat_dom_sf"/>
</dbReference>
<dbReference type="InterPro" id="IPR002501">
    <property type="entry name" value="PsdUridine_synth_N"/>
</dbReference>
<dbReference type="InterPro" id="IPR002478">
    <property type="entry name" value="PUA"/>
</dbReference>
<dbReference type="InterPro" id="IPR015947">
    <property type="entry name" value="PUA-like_sf"/>
</dbReference>
<dbReference type="InterPro" id="IPR036974">
    <property type="entry name" value="PUA_sf"/>
</dbReference>
<dbReference type="InterPro" id="IPR004802">
    <property type="entry name" value="tRNA_PsdUridine_synth_B_fam"/>
</dbReference>
<dbReference type="InterPro" id="IPR026326">
    <property type="entry name" value="TruB_arch"/>
</dbReference>
<dbReference type="InterPro" id="IPR032819">
    <property type="entry name" value="TruB_C"/>
</dbReference>
<dbReference type="InterPro" id="IPR004521">
    <property type="entry name" value="Uncharacterised_CHP00451"/>
</dbReference>
<dbReference type="NCBIfam" id="TIGR00425">
    <property type="entry name" value="CBF5"/>
    <property type="match status" value="1"/>
</dbReference>
<dbReference type="NCBIfam" id="NF003280">
    <property type="entry name" value="PRK04270.1"/>
    <property type="match status" value="1"/>
</dbReference>
<dbReference type="NCBIfam" id="TIGR00451">
    <property type="entry name" value="unchar_dom_2"/>
    <property type="match status" value="1"/>
</dbReference>
<dbReference type="PANTHER" id="PTHR23127">
    <property type="entry name" value="CENTROMERE/MICROTUBULE BINDING PROTEIN CBF5"/>
    <property type="match status" value="1"/>
</dbReference>
<dbReference type="PANTHER" id="PTHR23127:SF0">
    <property type="entry name" value="H_ACA RIBONUCLEOPROTEIN COMPLEX SUBUNIT DKC1"/>
    <property type="match status" value="1"/>
</dbReference>
<dbReference type="Pfam" id="PF08068">
    <property type="entry name" value="DKCLD"/>
    <property type="match status" value="1"/>
</dbReference>
<dbReference type="Pfam" id="PF01472">
    <property type="entry name" value="PUA"/>
    <property type="match status" value="1"/>
</dbReference>
<dbReference type="Pfam" id="PF16198">
    <property type="entry name" value="TruB_C_2"/>
    <property type="match status" value="1"/>
</dbReference>
<dbReference type="Pfam" id="PF01509">
    <property type="entry name" value="TruB_N"/>
    <property type="match status" value="1"/>
</dbReference>
<dbReference type="SMART" id="SM01136">
    <property type="entry name" value="DKCLD"/>
    <property type="match status" value="1"/>
</dbReference>
<dbReference type="SMART" id="SM00359">
    <property type="entry name" value="PUA"/>
    <property type="match status" value="1"/>
</dbReference>
<dbReference type="SUPFAM" id="SSF55120">
    <property type="entry name" value="Pseudouridine synthase"/>
    <property type="match status" value="1"/>
</dbReference>
<dbReference type="SUPFAM" id="SSF88697">
    <property type="entry name" value="PUA domain-like"/>
    <property type="match status" value="1"/>
</dbReference>
<dbReference type="PROSITE" id="PS50890">
    <property type="entry name" value="PUA"/>
    <property type="match status" value="1"/>
</dbReference>
<comment type="function">
    <text evidence="1">Could be responsible for synthesis of pseudouridine from uracil-55 in the psi GC loop of transfer RNAs.</text>
</comment>
<comment type="catalytic activity">
    <reaction evidence="1">
        <text>uridine(55) in tRNA = pseudouridine(55) in tRNA</text>
        <dbReference type="Rhea" id="RHEA:42532"/>
        <dbReference type="Rhea" id="RHEA-COMP:10101"/>
        <dbReference type="Rhea" id="RHEA-COMP:10102"/>
        <dbReference type="ChEBI" id="CHEBI:65314"/>
        <dbReference type="ChEBI" id="CHEBI:65315"/>
        <dbReference type="EC" id="5.4.99.25"/>
    </reaction>
</comment>
<comment type="similarity">
    <text evidence="1">Belongs to the pseudouridine synthase TruB family. Type 2 subfamily.</text>
</comment>
<reference key="1">
    <citation type="journal article" date="2005" name="Genome Res.">
        <title>Complete genome sequence of the hyperthermophilic archaeon Thermococcus kodakaraensis KOD1 and comparison with Pyrococcus genomes.</title>
        <authorList>
            <person name="Fukui T."/>
            <person name="Atomi H."/>
            <person name="Kanai T."/>
            <person name="Matsumi R."/>
            <person name="Fujiwara S."/>
            <person name="Imanaka T."/>
        </authorList>
    </citation>
    <scope>NUCLEOTIDE SEQUENCE [LARGE SCALE GENOMIC DNA]</scope>
    <source>
        <strain>ATCC BAA-918 / JCM 12380 / KOD1</strain>
    </source>
</reference>